<evidence type="ECO:0000255" key="1">
    <source>
        <dbReference type="HAMAP-Rule" id="MF_01341"/>
    </source>
</evidence>
<evidence type="ECO:0000256" key="2">
    <source>
        <dbReference type="SAM" id="MobiDB-lite"/>
    </source>
</evidence>
<evidence type="ECO:0000305" key="3"/>
<proteinExistence type="inferred from homology"/>
<organism>
    <name type="scientific">Actinobacillus succinogenes (strain ATCC 55618 / DSM 22257 / CCUG 43843 / 130Z)</name>
    <dbReference type="NCBI Taxonomy" id="339671"/>
    <lineage>
        <taxon>Bacteria</taxon>
        <taxon>Pseudomonadati</taxon>
        <taxon>Pseudomonadota</taxon>
        <taxon>Gammaproteobacteria</taxon>
        <taxon>Pasteurellales</taxon>
        <taxon>Pasteurellaceae</taxon>
        <taxon>Actinobacillus</taxon>
    </lineage>
</organism>
<keyword id="KW-1185">Reference proteome</keyword>
<keyword id="KW-0687">Ribonucleoprotein</keyword>
<keyword id="KW-0689">Ribosomal protein</keyword>
<keyword id="KW-0694">RNA-binding</keyword>
<keyword id="KW-0699">rRNA-binding</keyword>
<protein>
    <recommendedName>
        <fullName evidence="1">Large ribosomal subunit protein uL15</fullName>
    </recommendedName>
    <alternativeName>
        <fullName evidence="3">50S ribosomal protein L15</fullName>
    </alternativeName>
</protein>
<feature type="chain" id="PRO_1000073312" description="Large ribosomal subunit protein uL15">
    <location>
        <begin position="1"/>
        <end position="144"/>
    </location>
</feature>
<feature type="region of interest" description="Disordered" evidence="2">
    <location>
        <begin position="1"/>
        <end position="51"/>
    </location>
</feature>
<feature type="compositionally biased region" description="Gly residues" evidence="2">
    <location>
        <begin position="21"/>
        <end position="31"/>
    </location>
</feature>
<feature type="compositionally biased region" description="Basic residues" evidence="2">
    <location>
        <begin position="32"/>
        <end position="47"/>
    </location>
</feature>
<reference key="1">
    <citation type="journal article" date="2010" name="BMC Genomics">
        <title>A genomic perspective on the potential of Actinobacillus succinogenes for industrial succinate production.</title>
        <authorList>
            <person name="McKinlay J.B."/>
            <person name="Laivenieks M."/>
            <person name="Schindler B.D."/>
            <person name="McKinlay A.A."/>
            <person name="Siddaramappa S."/>
            <person name="Challacombe J.F."/>
            <person name="Lowry S.R."/>
            <person name="Clum A."/>
            <person name="Lapidus A.L."/>
            <person name="Burkhart K.B."/>
            <person name="Harkins V."/>
            <person name="Vieille C."/>
        </authorList>
    </citation>
    <scope>NUCLEOTIDE SEQUENCE [LARGE SCALE GENOMIC DNA]</scope>
    <source>
        <strain>ATCC 55618 / DSM 22257 / CCUG 43843 / 130Z</strain>
    </source>
</reference>
<sequence length="144" mass="15092">MRLNTLSPAEGAKHSAKRLGRGIGSGLGKTGGRGHKGQKSRTGGKVRRGFEGGQMPLYRRLPKFGFTSKIAAVTAEIRLNDLTKVDGNIVTLEALKAANVITKDIQFAKVILAGEINNAVTIRGLRVTQGAKAAIEAAGGSVEE</sequence>
<accession>A6VLK7</accession>
<dbReference type="EMBL" id="CP000746">
    <property type="protein sequence ID" value="ABR73854.1"/>
    <property type="molecule type" value="Genomic_DNA"/>
</dbReference>
<dbReference type="RefSeq" id="WP_012072234.1">
    <property type="nucleotide sequence ID" value="NC_009655.1"/>
</dbReference>
<dbReference type="SMR" id="A6VLK7"/>
<dbReference type="STRING" id="339671.Asuc_0478"/>
<dbReference type="KEGG" id="asu:Asuc_0478"/>
<dbReference type="eggNOG" id="COG0200">
    <property type="taxonomic scope" value="Bacteria"/>
</dbReference>
<dbReference type="HOGENOM" id="CLU_055188_4_2_6"/>
<dbReference type="OrthoDB" id="9810293at2"/>
<dbReference type="Proteomes" id="UP000001114">
    <property type="component" value="Chromosome"/>
</dbReference>
<dbReference type="GO" id="GO:0022625">
    <property type="term" value="C:cytosolic large ribosomal subunit"/>
    <property type="evidence" value="ECO:0007669"/>
    <property type="project" value="TreeGrafter"/>
</dbReference>
<dbReference type="GO" id="GO:0019843">
    <property type="term" value="F:rRNA binding"/>
    <property type="evidence" value="ECO:0007669"/>
    <property type="project" value="UniProtKB-UniRule"/>
</dbReference>
<dbReference type="GO" id="GO:0003735">
    <property type="term" value="F:structural constituent of ribosome"/>
    <property type="evidence" value="ECO:0007669"/>
    <property type="project" value="InterPro"/>
</dbReference>
<dbReference type="GO" id="GO:0006412">
    <property type="term" value="P:translation"/>
    <property type="evidence" value="ECO:0007669"/>
    <property type="project" value="UniProtKB-UniRule"/>
</dbReference>
<dbReference type="Gene3D" id="3.100.10.10">
    <property type="match status" value="1"/>
</dbReference>
<dbReference type="HAMAP" id="MF_01341">
    <property type="entry name" value="Ribosomal_uL15"/>
    <property type="match status" value="1"/>
</dbReference>
<dbReference type="InterPro" id="IPR030878">
    <property type="entry name" value="Ribosomal_uL15"/>
</dbReference>
<dbReference type="InterPro" id="IPR021131">
    <property type="entry name" value="Ribosomal_uL15/eL18"/>
</dbReference>
<dbReference type="InterPro" id="IPR036227">
    <property type="entry name" value="Ribosomal_uL15/eL18_sf"/>
</dbReference>
<dbReference type="InterPro" id="IPR005749">
    <property type="entry name" value="Ribosomal_uL15_bac-type"/>
</dbReference>
<dbReference type="InterPro" id="IPR001196">
    <property type="entry name" value="Ribosomal_uL15_CS"/>
</dbReference>
<dbReference type="NCBIfam" id="TIGR01071">
    <property type="entry name" value="rplO_bact"/>
    <property type="match status" value="1"/>
</dbReference>
<dbReference type="PANTHER" id="PTHR12934">
    <property type="entry name" value="50S RIBOSOMAL PROTEIN L15"/>
    <property type="match status" value="1"/>
</dbReference>
<dbReference type="PANTHER" id="PTHR12934:SF11">
    <property type="entry name" value="LARGE RIBOSOMAL SUBUNIT PROTEIN UL15M"/>
    <property type="match status" value="1"/>
</dbReference>
<dbReference type="Pfam" id="PF00828">
    <property type="entry name" value="Ribosomal_L27A"/>
    <property type="match status" value="1"/>
</dbReference>
<dbReference type="SUPFAM" id="SSF52080">
    <property type="entry name" value="Ribosomal proteins L15p and L18e"/>
    <property type="match status" value="1"/>
</dbReference>
<dbReference type="PROSITE" id="PS00475">
    <property type="entry name" value="RIBOSOMAL_L15"/>
    <property type="match status" value="1"/>
</dbReference>
<name>RL15_ACTSZ</name>
<comment type="function">
    <text evidence="1">Binds to the 23S rRNA.</text>
</comment>
<comment type="subunit">
    <text evidence="1">Part of the 50S ribosomal subunit.</text>
</comment>
<comment type="similarity">
    <text evidence="1">Belongs to the universal ribosomal protein uL15 family.</text>
</comment>
<gene>
    <name evidence="1" type="primary">rplO</name>
    <name type="ordered locus">Asuc_0478</name>
</gene>